<evidence type="ECO:0000250" key="1">
    <source>
        <dbReference type="UniProtKB" id="P70583"/>
    </source>
</evidence>
<evidence type="ECO:0000250" key="2">
    <source>
        <dbReference type="UniProtKB" id="Q9CQ43"/>
    </source>
</evidence>
<evidence type="ECO:0000256" key="3">
    <source>
        <dbReference type="SAM" id="MobiDB-lite"/>
    </source>
</evidence>
<evidence type="ECO:0000269" key="4">
    <source>
    </source>
</evidence>
<evidence type="ECO:0000269" key="5">
    <source>
    </source>
</evidence>
<evidence type="ECO:0000269" key="6">
    <source>
    </source>
</evidence>
<evidence type="ECO:0000269" key="7">
    <source>
    </source>
</evidence>
<evidence type="ECO:0000269" key="8">
    <source>
    </source>
</evidence>
<evidence type="ECO:0000269" key="9">
    <source>
    </source>
</evidence>
<evidence type="ECO:0000269" key="10">
    <source>
    </source>
</evidence>
<evidence type="ECO:0000269" key="11">
    <source>
    </source>
</evidence>
<evidence type="ECO:0000269" key="12">
    <source>
    </source>
</evidence>
<evidence type="ECO:0000269" key="13">
    <source>
    </source>
</evidence>
<evidence type="ECO:0000269" key="14">
    <source ref="8"/>
</evidence>
<evidence type="ECO:0000303" key="15">
    <source>
    </source>
</evidence>
<evidence type="ECO:0000303" key="16">
    <source>
    </source>
</evidence>
<evidence type="ECO:0000303" key="17">
    <source>
    </source>
</evidence>
<evidence type="ECO:0000303" key="18">
    <source>
    </source>
</evidence>
<evidence type="ECO:0000303" key="19">
    <source ref="5"/>
</evidence>
<evidence type="ECO:0000303" key="20">
    <source ref="7"/>
</evidence>
<evidence type="ECO:0000305" key="21"/>
<evidence type="ECO:0000305" key="22">
    <source>
    </source>
</evidence>
<evidence type="ECO:0007744" key="23">
    <source>
        <dbReference type="PDB" id="1Q5H"/>
    </source>
</evidence>
<evidence type="ECO:0007744" key="24">
    <source>
        <dbReference type="PDB" id="2HQU"/>
    </source>
</evidence>
<evidence type="ECO:0007744" key="25">
    <source>
        <dbReference type="PDB" id="3ARA"/>
    </source>
</evidence>
<evidence type="ECO:0007744" key="26">
    <source>
        <dbReference type="PDB" id="3ARN"/>
    </source>
</evidence>
<evidence type="ECO:0007744" key="27">
    <source>
        <dbReference type="PDB" id="3EHW"/>
    </source>
</evidence>
<evidence type="ECO:0007744" key="28">
    <source>
    </source>
</evidence>
<evidence type="ECO:0007744" key="29">
    <source>
    </source>
</evidence>
<evidence type="ECO:0007744" key="30">
    <source>
    </source>
</evidence>
<evidence type="ECO:0007744" key="31">
    <source>
    </source>
</evidence>
<evidence type="ECO:0007744" key="32">
    <source>
    </source>
</evidence>
<evidence type="ECO:0007829" key="33">
    <source>
        <dbReference type="PDB" id="3ARA"/>
    </source>
</evidence>
<evidence type="ECO:0007829" key="34">
    <source>
        <dbReference type="PDB" id="3EHW"/>
    </source>
</evidence>
<organism>
    <name type="scientific">Homo sapiens</name>
    <name type="common">Human</name>
    <dbReference type="NCBI Taxonomy" id="9606"/>
    <lineage>
        <taxon>Eukaryota</taxon>
        <taxon>Metazoa</taxon>
        <taxon>Chordata</taxon>
        <taxon>Craniata</taxon>
        <taxon>Vertebrata</taxon>
        <taxon>Euteleostomi</taxon>
        <taxon>Mammalia</taxon>
        <taxon>Eutheria</taxon>
        <taxon>Euarchontoglires</taxon>
        <taxon>Primates</taxon>
        <taxon>Haplorrhini</taxon>
        <taxon>Catarrhini</taxon>
        <taxon>Hominidae</taxon>
        <taxon>Homo</taxon>
    </lineage>
</organism>
<dbReference type="EC" id="3.6.1.23" evidence="4 9 11"/>
<dbReference type="EMBL" id="U31930">
    <property type="protein sequence ID" value="AAC50418.1"/>
    <property type="molecule type" value="mRNA"/>
</dbReference>
<dbReference type="EMBL" id="U62891">
    <property type="protein sequence ID" value="AAC51123.1"/>
    <property type="molecule type" value="mRNA"/>
</dbReference>
<dbReference type="EMBL" id="AF018432">
    <property type="protein sequence ID" value="AAB71393.1"/>
    <property type="status" value="ALT_FRAME"/>
    <property type="molecule type" value="Genomic_DNA"/>
</dbReference>
<dbReference type="EMBL" id="AF018429">
    <property type="protein sequence ID" value="AAB71393.1"/>
    <property type="status" value="JOINED"/>
    <property type="molecule type" value="Genomic_DNA"/>
</dbReference>
<dbReference type="EMBL" id="AF018430">
    <property type="protein sequence ID" value="AAB71393.1"/>
    <property type="status" value="JOINED"/>
    <property type="molecule type" value="Genomic_DNA"/>
</dbReference>
<dbReference type="EMBL" id="AF018431">
    <property type="protein sequence ID" value="AAB71393.1"/>
    <property type="status" value="JOINED"/>
    <property type="molecule type" value="Genomic_DNA"/>
</dbReference>
<dbReference type="EMBL" id="AF018432">
    <property type="protein sequence ID" value="AAB71394.1"/>
    <property type="molecule type" value="Genomic_DNA"/>
</dbReference>
<dbReference type="EMBL" id="AF018429">
    <property type="protein sequence ID" value="AAB71394.1"/>
    <property type="status" value="JOINED"/>
    <property type="molecule type" value="Genomic_DNA"/>
</dbReference>
<dbReference type="EMBL" id="AF018430">
    <property type="protein sequence ID" value="AAB71394.1"/>
    <property type="status" value="JOINED"/>
    <property type="molecule type" value="Genomic_DNA"/>
</dbReference>
<dbReference type="EMBL" id="AF018431">
    <property type="protein sequence ID" value="AAB71394.1"/>
    <property type="status" value="JOINED"/>
    <property type="molecule type" value="Genomic_DNA"/>
</dbReference>
<dbReference type="EMBL" id="U90223">
    <property type="protein sequence ID" value="AAB94642.1"/>
    <property type="status" value="ALT_FRAME"/>
    <property type="molecule type" value="mRNA"/>
</dbReference>
<dbReference type="EMBL" id="U90224">
    <property type="protein sequence ID" value="AAB93866.1"/>
    <property type="status" value="ALT_FRAME"/>
    <property type="molecule type" value="Genomic_DNA"/>
</dbReference>
<dbReference type="EMBL" id="U90224">
    <property type="protein sequence ID" value="AAB93867.1"/>
    <property type="molecule type" value="Genomic_DNA"/>
</dbReference>
<dbReference type="EMBL" id="AB049113">
    <property type="protein sequence ID" value="BAB13724.1"/>
    <property type="molecule type" value="mRNA"/>
</dbReference>
<dbReference type="EMBL" id="AY935242">
    <property type="protein sequence ID" value="AAX14045.1"/>
    <property type="molecule type" value="Genomic_DNA"/>
</dbReference>
<dbReference type="EMBL" id="AK291515">
    <property type="protein sequence ID" value="BAF84204.1"/>
    <property type="molecule type" value="mRNA"/>
</dbReference>
<dbReference type="EMBL" id="AK312122">
    <property type="protein sequence ID" value="BAG35058.1"/>
    <property type="molecule type" value="mRNA"/>
</dbReference>
<dbReference type="EMBL" id="CR541720">
    <property type="protein sequence ID" value="CAG46521.1"/>
    <property type="molecule type" value="mRNA"/>
</dbReference>
<dbReference type="EMBL" id="CR541781">
    <property type="protein sequence ID" value="CAG46580.1"/>
    <property type="molecule type" value="mRNA"/>
</dbReference>
<dbReference type="EMBL" id="CH471082">
    <property type="protein sequence ID" value="EAW77350.1"/>
    <property type="molecule type" value="Genomic_DNA"/>
</dbReference>
<dbReference type="EMBL" id="AK298464">
    <property type="protein sequence ID" value="BAG60677.1"/>
    <property type="molecule type" value="mRNA"/>
</dbReference>
<dbReference type="EMBL" id="BC033645">
    <property type="protein sequence ID" value="AAH33645.1"/>
    <property type="molecule type" value="mRNA"/>
</dbReference>
<dbReference type="EMBL" id="BC070339">
    <property type="protein sequence ID" value="AAH70339.1"/>
    <property type="molecule type" value="mRNA"/>
</dbReference>
<dbReference type="EMBL" id="BC110377">
    <property type="protein sequence ID" value="AAI10378.1"/>
    <property type="molecule type" value="mRNA"/>
</dbReference>
<dbReference type="EMBL" id="M89913">
    <property type="protein sequence ID" value="AAA58444.1"/>
    <property type="molecule type" value="mRNA"/>
</dbReference>
<dbReference type="EMBL" id="L11877">
    <property type="protein sequence ID" value="AAA36801.1"/>
    <property type="molecule type" value="mRNA"/>
</dbReference>
<dbReference type="CCDS" id="CCDS32231.1">
    <molecule id="P33316-3"/>
</dbReference>
<dbReference type="CCDS" id="CCDS45255.1">
    <molecule id="P33316-2"/>
</dbReference>
<dbReference type="PIR" id="A46256">
    <property type="entry name" value="A46256"/>
</dbReference>
<dbReference type="PIR" id="G02777">
    <property type="entry name" value="G02777"/>
</dbReference>
<dbReference type="RefSeq" id="NP_001020419.1">
    <molecule id="P33316-3"/>
    <property type="nucleotide sequence ID" value="NM_001025248.2"/>
</dbReference>
<dbReference type="RefSeq" id="NP_001020420.1">
    <property type="nucleotide sequence ID" value="NM_001025249.1"/>
</dbReference>
<dbReference type="RefSeq" id="NP_001317215.1">
    <property type="nucleotide sequence ID" value="NM_001330286.1"/>
</dbReference>
<dbReference type="RefSeq" id="NP_001939.1">
    <molecule id="P33316-2"/>
    <property type="nucleotide sequence ID" value="NM_001948.4"/>
</dbReference>
<dbReference type="PDB" id="1Q5H">
    <property type="method" value="X-ray"/>
    <property type="resolution" value="2.00 A"/>
    <property type="chains" value="A/B/C=112-252"/>
</dbReference>
<dbReference type="PDB" id="1Q5U">
    <property type="method" value="X-ray"/>
    <property type="resolution" value="2.00 A"/>
    <property type="chains" value="X/Y/Z=112-252"/>
</dbReference>
<dbReference type="PDB" id="2HQU">
    <property type="method" value="X-ray"/>
    <property type="resolution" value="2.20 A"/>
    <property type="chains" value="A/B/C=94-252"/>
</dbReference>
<dbReference type="PDB" id="3ARA">
    <property type="method" value="X-ray"/>
    <property type="resolution" value="1.70 A"/>
    <property type="chains" value="A/B/C=94-252"/>
</dbReference>
<dbReference type="PDB" id="3ARN">
    <property type="method" value="X-ray"/>
    <property type="resolution" value="1.80 A"/>
    <property type="chains" value="A/B/C=94-252"/>
</dbReference>
<dbReference type="PDB" id="3EHW">
    <property type="method" value="X-ray"/>
    <property type="resolution" value="1.80 A"/>
    <property type="chains" value="A/B/C/X/Y/Z=94-252"/>
</dbReference>
<dbReference type="PDB" id="4MZ5">
    <property type="method" value="X-ray"/>
    <property type="resolution" value="2.10 A"/>
    <property type="chains" value="A/C=97-109"/>
</dbReference>
<dbReference type="PDB" id="4MZ6">
    <property type="method" value="X-ray"/>
    <property type="resolution" value="1.88 A"/>
    <property type="chains" value="A/C=97-109"/>
</dbReference>
<dbReference type="PDB" id="5H4J">
    <property type="method" value="X-ray"/>
    <property type="resolution" value="1.80 A"/>
    <property type="chains" value="A=94-252"/>
</dbReference>
<dbReference type="PDB" id="7PWJ">
    <property type="method" value="X-ray"/>
    <property type="resolution" value="1.94 A"/>
    <property type="chains" value="AAA/BBB/DDD=111-252"/>
</dbReference>
<dbReference type="PDB" id="8C8I">
    <property type="method" value="X-ray"/>
    <property type="resolution" value="3.20 A"/>
    <property type="chains" value="A/B/C=112-239"/>
</dbReference>
<dbReference type="PDBsum" id="1Q5H"/>
<dbReference type="PDBsum" id="1Q5U"/>
<dbReference type="PDBsum" id="2HQU"/>
<dbReference type="PDBsum" id="3ARA"/>
<dbReference type="PDBsum" id="3ARN"/>
<dbReference type="PDBsum" id="3EHW"/>
<dbReference type="PDBsum" id="4MZ5"/>
<dbReference type="PDBsum" id="4MZ6"/>
<dbReference type="PDBsum" id="5H4J"/>
<dbReference type="PDBsum" id="7PWJ"/>
<dbReference type="PDBsum" id="8C8I"/>
<dbReference type="BMRB" id="P33316"/>
<dbReference type="SASBDB" id="P33316"/>
<dbReference type="SMR" id="P33316"/>
<dbReference type="BioGRID" id="108187">
    <property type="interactions" value="137"/>
</dbReference>
<dbReference type="FunCoup" id="P33316">
    <property type="interactions" value="2491"/>
</dbReference>
<dbReference type="IntAct" id="P33316">
    <property type="interactions" value="45"/>
</dbReference>
<dbReference type="MINT" id="P33316"/>
<dbReference type="STRING" id="9606.ENSP00000370376"/>
<dbReference type="BindingDB" id="P33316"/>
<dbReference type="ChEMBL" id="CHEMBL5203"/>
<dbReference type="DrugBank" id="DB04685">
    <property type="generic name" value="1-{(2S,5S)-4-FLUORO-5-[(TRITYLOXY)METHYL]TETRAHYDROFURAN-2-YL}PYRIMIDINE-2,4(1H,3H)-DIONE"/>
</dbReference>
<dbReference type="DrugBank" id="DB03413">
    <property type="generic name" value="Deoxyuridine-5'-Diphosphate"/>
</dbReference>
<dbReference type="GlyGen" id="P33316">
    <property type="glycosylation" value="3 sites, 2 O-linked glycans (3 sites)"/>
</dbReference>
<dbReference type="iPTMnet" id="P33316"/>
<dbReference type="MetOSite" id="P33316"/>
<dbReference type="PhosphoSitePlus" id="P33316"/>
<dbReference type="SwissPalm" id="P33316"/>
<dbReference type="BioMuta" id="DUT"/>
<dbReference type="DMDM" id="347595814"/>
<dbReference type="CPTAC" id="CPTAC-64"/>
<dbReference type="CPTAC" id="CPTAC-65"/>
<dbReference type="jPOST" id="P33316"/>
<dbReference type="MassIVE" id="P33316"/>
<dbReference type="PaxDb" id="9606-ENSP00000370376"/>
<dbReference type="PeptideAtlas" id="P33316"/>
<dbReference type="ProteomicsDB" id="54908">
    <molecule id="P33316-3"/>
</dbReference>
<dbReference type="ProteomicsDB" id="54909">
    <molecule id="P33316-2"/>
</dbReference>
<dbReference type="Pumba" id="P33316"/>
<dbReference type="TopDownProteomics" id="P33316-2">
    <molecule id="P33316-2"/>
</dbReference>
<dbReference type="TopDownProteomics" id="P33316-3">
    <molecule id="P33316-3"/>
</dbReference>
<dbReference type="Antibodypedia" id="24524">
    <property type="antibodies" value="389 antibodies from 31 providers"/>
</dbReference>
<dbReference type="DNASU" id="1854"/>
<dbReference type="Ensembl" id="ENST00000331200.8">
    <molecule id="P33316-3"/>
    <property type="protein sequence ID" value="ENSP00000370376.2"/>
    <property type="gene ID" value="ENSG00000128951.14"/>
</dbReference>
<dbReference type="Ensembl" id="ENST00000455976.6">
    <molecule id="P33316-2"/>
    <property type="protein sequence ID" value="ENSP00000405160.2"/>
    <property type="gene ID" value="ENSG00000128951.14"/>
</dbReference>
<dbReference type="GeneID" id="1854"/>
<dbReference type="KEGG" id="hsa:1854"/>
<dbReference type="MANE-Select" id="ENST00000331200.8">
    <property type="protein sequence ID" value="ENSP00000370376.2"/>
    <property type="RefSeq nucleotide sequence ID" value="NM_001025248.2"/>
    <property type="RefSeq protein sequence ID" value="NP_001020419.1"/>
</dbReference>
<dbReference type="UCSC" id="uc001zws.4">
    <molecule id="P33316-3"/>
    <property type="organism name" value="human"/>
</dbReference>
<dbReference type="AGR" id="HGNC:3078"/>
<dbReference type="CTD" id="1854"/>
<dbReference type="DisGeNET" id="1854"/>
<dbReference type="GeneCards" id="DUT"/>
<dbReference type="HGNC" id="HGNC:3078">
    <property type="gene designation" value="DUT"/>
</dbReference>
<dbReference type="HPA" id="ENSG00000128951">
    <property type="expression patterns" value="Low tissue specificity"/>
</dbReference>
<dbReference type="MalaCards" id="DUT"/>
<dbReference type="MIM" id="601266">
    <property type="type" value="gene"/>
</dbReference>
<dbReference type="MIM" id="620044">
    <property type="type" value="phenotype"/>
</dbReference>
<dbReference type="neXtProt" id="NX_P33316"/>
<dbReference type="OpenTargets" id="ENSG00000128951"/>
<dbReference type="PharmGKB" id="PA151"/>
<dbReference type="VEuPathDB" id="HostDB:ENSG00000128951"/>
<dbReference type="eggNOG" id="KOG3370">
    <property type="taxonomic scope" value="Eukaryota"/>
</dbReference>
<dbReference type="GeneTree" id="ENSGT00390000018390"/>
<dbReference type="InParanoid" id="P33316"/>
<dbReference type="OrthoDB" id="419889at2759"/>
<dbReference type="PAN-GO" id="P33316">
    <property type="GO annotations" value="4 GO annotations based on evolutionary models"/>
</dbReference>
<dbReference type="PhylomeDB" id="P33316"/>
<dbReference type="TreeFam" id="TF105416"/>
<dbReference type="BioCyc" id="MetaCyc:HS05235-MONOMER"/>
<dbReference type="BRENDA" id="3.6.1.23">
    <property type="organism ID" value="2681"/>
</dbReference>
<dbReference type="PathwayCommons" id="P33316"/>
<dbReference type="Reactome" id="R-HSA-499943">
    <molecule id="P33316-2"/>
    <property type="pathway name" value="Interconversion of nucleotide di- and triphosphates"/>
</dbReference>
<dbReference type="SABIO-RK" id="P33316"/>
<dbReference type="SignaLink" id="P33316"/>
<dbReference type="SIGNOR" id="P33316"/>
<dbReference type="UniPathway" id="UPA00610">
    <property type="reaction ID" value="UER00666"/>
</dbReference>
<dbReference type="BioGRID-ORCS" id="1854">
    <property type="hits" value="838 hits in 1189 CRISPR screens"/>
</dbReference>
<dbReference type="ChiTaRS" id="DUT">
    <property type="organism name" value="human"/>
</dbReference>
<dbReference type="EvolutionaryTrace" id="P33316"/>
<dbReference type="GeneWiki" id="DUT_(gene)"/>
<dbReference type="GenomeRNAi" id="1854"/>
<dbReference type="Pharos" id="P33316">
    <property type="development level" value="Tchem"/>
</dbReference>
<dbReference type="PRO" id="PR:P33316"/>
<dbReference type="Proteomes" id="UP000005640">
    <property type="component" value="Chromosome 15"/>
</dbReference>
<dbReference type="RNAct" id="P33316">
    <property type="molecule type" value="protein"/>
</dbReference>
<dbReference type="Bgee" id="ENSG00000128951">
    <property type="expression patterns" value="Expressed in pylorus and 215 other cell types or tissues"/>
</dbReference>
<dbReference type="ExpressionAtlas" id="P33316">
    <property type="expression patterns" value="baseline and differential"/>
</dbReference>
<dbReference type="GO" id="GO:0070062">
    <property type="term" value="C:extracellular exosome"/>
    <property type="evidence" value="ECO:0007005"/>
    <property type="project" value="UniProtKB"/>
</dbReference>
<dbReference type="GO" id="GO:0005739">
    <property type="term" value="C:mitochondrion"/>
    <property type="evidence" value="ECO:0006056"/>
    <property type="project" value="FlyBase"/>
</dbReference>
<dbReference type="GO" id="GO:0005654">
    <property type="term" value="C:nucleoplasm"/>
    <property type="evidence" value="ECO:0000314"/>
    <property type="project" value="HPA"/>
</dbReference>
<dbReference type="GO" id="GO:0005634">
    <property type="term" value="C:nucleus"/>
    <property type="evidence" value="ECO:0000314"/>
    <property type="project" value="MGI"/>
</dbReference>
<dbReference type="GO" id="GO:0004170">
    <property type="term" value="F:dUTP diphosphatase activity"/>
    <property type="evidence" value="ECO:0000314"/>
    <property type="project" value="MGI"/>
</dbReference>
<dbReference type="GO" id="GO:0042802">
    <property type="term" value="F:identical protein binding"/>
    <property type="evidence" value="ECO:0007669"/>
    <property type="project" value="Ensembl"/>
</dbReference>
<dbReference type="GO" id="GO:0000287">
    <property type="term" value="F:magnesium ion binding"/>
    <property type="evidence" value="ECO:0000318"/>
    <property type="project" value="GO_Central"/>
</dbReference>
<dbReference type="GO" id="GO:0042975">
    <property type="term" value="F:peroxisome proliferator activated receptor binding"/>
    <property type="evidence" value="ECO:0007669"/>
    <property type="project" value="Ensembl"/>
</dbReference>
<dbReference type="GO" id="GO:0032556">
    <property type="term" value="F:pyrimidine deoxyribonucleotide binding"/>
    <property type="evidence" value="ECO:0007669"/>
    <property type="project" value="Ensembl"/>
</dbReference>
<dbReference type="GO" id="GO:0003723">
    <property type="term" value="F:RNA binding"/>
    <property type="evidence" value="ECO:0007005"/>
    <property type="project" value="UniProtKB"/>
</dbReference>
<dbReference type="GO" id="GO:0030547">
    <property type="term" value="F:signaling receptor inhibitor activity"/>
    <property type="evidence" value="ECO:0007669"/>
    <property type="project" value="Ensembl"/>
</dbReference>
<dbReference type="GO" id="GO:0006260">
    <property type="term" value="P:DNA replication"/>
    <property type="evidence" value="ECO:0000304"/>
    <property type="project" value="ProtInc"/>
</dbReference>
<dbReference type="GO" id="GO:0006231">
    <property type="term" value="P:dTMP biosynthetic process"/>
    <property type="evidence" value="ECO:0000314"/>
    <property type="project" value="MGI"/>
</dbReference>
<dbReference type="GO" id="GO:0006226">
    <property type="term" value="P:dUMP biosynthetic process"/>
    <property type="evidence" value="ECO:0000318"/>
    <property type="project" value="GO_Central"/>
</dbReference>
<dbReference type="GO" id="GO:0046081">
    <property type="term" value="P:dUTP catabolic process"/>
    <property type="evidence" value="ECO:0000318"/>
    <property type="project" value="GO_Central"/>
</dbReference>
<dbReference type="GO" id="GO:0001889">
    <property type="term" value="P:liver development"/>
    <property type="evidence" value="ECO:0007669"/>
    <property type="project" value="Ensembl"/>
</dbReference>
<dbReference type="GO" id="GO:0006139">
    <property type="term" value="P:nucleobase-containing compound metabolic process"/>
    <property type="evidence" value="ECO:0000304"/>
    <property type="project" value="ProtInc"/>
</dbReference>
<dbReference type="GO" id="GO:0043254">
    <property type="term" value="P:regulation of protein-containing complex assembly"/>
    <property type="evidence" value="ECO:0007669"/>
    <property type="project" value="Ensembl"/>
</dbReference>
<dbReference type="CDD" id="cd07557">
    <property type="entry name" value="trimeric_dUTPase"/>
    <property type="match status" value="1"/>
</dbReference>
<dbReference type="FunFam" id="2.70.40.10:FF:000004">
    <property type="entry name" value="Deoxyuridine triphosphatase"/>
    <property type="match status" value="1"/>
</dbReference>
<dbReference type="Gene3D" id="2.70.40.10">
    <property type="match status" value="1"/>
</dbReference>
<dbReference type="InterPro" id="IPR008181">
    <property type="entry name" value="dUTPase"/>
</dbReference>
<dbReference type="InterPro" id="IPR029054">
    <property type="entry name" value="dUTPase-like"/>
</dbReference>
<dbReference type="InterPro" id="IPR036157">
    <property type="entry name" value="dUTPase-like_sf"/>
</dbReference>
<dbReference type="InterPro" id="IPR033704">
    <property type="entry name" value="dUTPase_trimeric"/>
</dbReference>
<dbReference type="NCBIfam" id="TIGR00576">
    <property type="entry name" value="dut"/>
    <property type="match status" value="1"/>
</dbReference>
<dbReference type="NCBIfam" id="NF001862">
    <property type="entry name" value="PRK00601.1"/>
    <property type="match status" value="1"/>
</dbReference>
<dbReference type="PANTHER" id="PTHR11241">
    <property type="entry name" value="DEOXYURIDINE 5'-TRIPHOSPHATE NUCLEOTIDOHYDROLASE"/>
    <property type="match status" value="1"/>
</dbReference>
<dbReference type="PANTHER" id="PTHR11241:SF11">
    <property type="entry name" value="DEOXYURIDINE 5'-TRIPHOSPHATE NUCLEOTIDOHYDROLASE, MITOCHONDRIAL"/>
    <property type="match status" value="1"/>
</dbReference>
<dbReference type="Pfam" id="PF00692">
    <property type="entry name" value="dUTPase"/>
    <property type="match status" value="1"/>
</dbReference>
<dbReference type="SUPFAM" id="SSF51283">
    <property type="entry name" value="dUTPase-like"/>
    <property type="match status" value="1"/>
</dbReference>
<feature type="transit peptide" description="Mitochondrion" evidence="9 10 32">
    <location>
        <begin position="1"/>
        <end position="69"/>
    </location>
</feature>
<feature type="chain" id="PRO_0000007392" description="Deoxyuridine 5'-triphosphate nucleotidohydrolase, mitochondrial">
    <location>
        <begin position="70"/>
        <end position="252"/>
    </location>
</feature>
<feature type="region of interest" description="Disordered" evidence="3">
    <location>
        <begin position="78"/>
        <end position="104"/>
    </location>
</feature>
<feature type="binding site" evidence="11 22 23 24 27">
    <location>
        <begin position="173"/>
        <end position="175"/>
    </location>
    <ligand>
        <name>dUTP</name>
        <dbReference type="ChEBI" id="CHEBI:61555"/>
    </ligand>
</feature>
<feature type="binding site" evidence="11 22 23 24 25 26 27">
    <location>
        <begin position="187"/>
        <end position="193"/>
    </location>
    <ligand>
        <name>dUTP</name>
        <dbReference type="ChEBI" id="CHEBI:61555"/>
    </ligand>
</feature>
<feature type="binding site" evidence="11 22 23 24 25 26 27">
    <location>
        <position position="198"/>
    </location>
    <ligand>
        <name>dUTP</name>
        <dbReference type="ChEBI" id="CHEBI:61555"/>
    </ligand>
</feature>
<feature type="binding site" evidence="11 22 23 24 27">
    <location>
        <position position="241"/>
    </location>
    <ligand>
        <name>dUTP</name>
        <dbReference type="ChEBI" id="CHEBI:61555"/>
    </ligand>
</feature>
<feature type="binding site" evidence="11 22 23 24 27">
    <location>
        <begin position="246"/>
        <end position="247"/>
    </location>
    <ligand>
        <name>dUTP</name>
        <dbReference type="ChEBI" id="CHEBI:61555"/>
    </ligand>
</feature>
<feature type="modified residue" description="Phosphoserine" evidence="28 30 31">
    <location>
        <position position="88"/>
    </location>
</feature>
<feature type="modified residue" description="Phosphoserine" evidence="30">
    <location>
        <position position="99"/>
    </location>
</feature>
<feature type="splice variant" id="VSP_001324" description="In isoform 2." evidence="15 16 17 18 19 20">
    <original>MTPLCPRPALCYHFLTSLLRSAMQNARGARQRAEAAVLSGPGPPLGRAAQHGIPRPLSSAGRLSQGCRGASTVGAAGWKGELPKAGGSPAPGP</original>
    <variation>MPCSE</variation>
    <location>
        <begin position="1"/>
        <end position="93"/>
    </location>
</feature>
<feature type="sequence variant" id="VAR_022314" description="In dbSNP:rs28381104." evidence="14">
    <original>P</original>
    <variation>S</variation>
    <location>
        <position position="100"/>
    </location>
</feature>
<feature type="sequence variant" id="VAR_087697" description="In BMFDMS; dbSNP:rs373184762." evidence="5 6 7">
    <original>Y</original>
    <variation>C</variation>
    <location>
        <position position="142"/>
    </location>
</feature>
<feature type="sequence variant" id="VAR_087698" description="In BMFDMS; uncertain significance; dbSNP:rs767416846." evidence="7">
    <original>R</original>
    <variation>W</variation>
    <location>
        <position position="173"/>
    </location>
</feature>
<feature type="sequence variant" id="VAR_087699" description="In BMFDMS; uncertain significance; dbSNP:rs771743286." evidence="7">
    <original>Y</original>
    <variation>C</variation>
    <location>
        <position position="227"/>
    </location>
</feature>
<feature type="mutagenesis site" description="Loss of phosphorylation." evidence="10">
    <original>S</original>
    <variation>A</variation>
    <location>
        <position position="99"/>
    </location>
</feature>
<feature type="sequence conflict" description="In Ref. 6; BAF84204." evidence="21" ref="6">
    <original>G</original>
    <variation>S</variation>
    <location>
        <position position="175"/>
    </location>
</feature>
<feature type="sequence conflict" description="In Ref. 6; BAG60677." evidence="21" ref="6">
    <original>I</original>
    <variation>T</variation>
    <location>
        <position position="182"/>
    </location>
</feature>
<feature type="strand" evidence="33">
    <location>
        <begin position="113"/>
        <end position="120"/>
    </location>
</feature>
<feature type="strand" evidence="34">
    <location>
        <begin position="127"/>
        <end position="130"/>
    </location>
</feature>
<feature type="strand" evidence="33">
    <location>
        <begin position="134"/>
        <end position="139"/>
    </location>
</feature>
<feature type="strand" evidence="33">
    <location>
        <begin position="144"/>
        <end position="146"/>
    </location>
</feature>
<feature type="strand" evidence="33">
    <location>
        <begin position="150"/>
        <end position="155"/>
    </location>
</feature>
<feature type="strand" evidence="33">
    <location>
        <begin position="158"/>
        <end position="161"/>
    </location>
</feature>
<feature type="strand" evidence="33">
    <location>
        <begin position="166"/>
        <end position="171"/>
    </location>
</feature>
<feature type="helix" evidence="33">
    <location>
        <begin position="174"/>
        <end position="180"/>
    </location>
</feature>
<feature type="strand" evidence="33">
    <location>
        <begin position="182"/>
        <end position="185"/>
    </location>
</feature>
<feature type="strand" evidence="33">
    <location>
        <begin position="198"/>
        <end position="203"/>
    </location>
</feature>
<feature type="strand" evidence="33">
    <location>
        <begin position="205"/>
        <end position="207"/>
    </location>
</feature>
<feature type="strand" evidence="33">
    <location>
        <begin position="209"/>
        <end position="211"/>
    </location>
</feature>
<feature type="strand" evidence="33">
    <location>
        <begin position="216"/>
        <end position="226"/>
    </location>
</feature>
<feature type="strand" evidence="33">
    <location>
        <begin position="229"/>
        <end position="232"/>
    </location>
</feature>
<feature type="strand" evidence="34">
    <location>
        <begin position="240"/>
        <end position="242"/>
    </location>
</feature>
<feature type="turn" evidence="34">
    <location>
        <begin position="246"/>
        <end position="249"/>
    </location>
</feature>
<feature type="initiator methionine" description="Removed" evidence="9">
    <location sequence="P33316-2">
        <position position="1"/>
    </location>
</feature>
<feature type="modified residue" description="Phosphoserine" evidence="10 28 29">
    <location sequence="P33316-2">
        <position position="11"/>
    </location>
</feature>
<comment type="function">
    <text evidence="1 2 4 9 11">Catalyzes the cleavage of 2'-deoxyuridine 5'-triphosphate (dUTP) into 2'-deoxyuridine 5'-monophosphate (dUMP) and inorganic pyrophosphate and through its action efficiently prevents uracil misincorporation into DNA and at the same time provides dUMP, the substrate for de novo thymidylate biosynthesis (PubMed:17880943, PubMed:8631816, PubMed:8805593). Inhibits peroxisome proliferator-activated receptor (PPAR) activity by binding of its N-terminal to PPAR, preventing the latter's dimerization with retinoid X receptor (By similarity). Essential for embryonic development (By similarity).</text>
</comment>
<comment type="catalytic activity">
    <reaction evidence="4 9 11">
        <text>dUTP + H2O = dUMP + diphosphate + H(+)</text>
        <dbReference type="Rhea" id="RHEA:10248"/>
        <dbReference type="ChEBI" id="CHEBI:15377"/>
        <dbReference type="ChEBI" id="CHEBI:15378"/>
        <dbReference type="ChEBI" id="CHEBI:33019"/>
        <dbReference type="ChEBI" id="CHEBI:61555"/>
        <dbReference type="ChEBI" id="CHEBI:246422"/>
        <dbReference type="EC" id="3.6.1.23"/>
    </reaction>
</comment>
<comment type="cofactor">
    <cofactor evidence="11">
        <name>Mg(2+)</name>
        <dbReference type="ChEBI" id="CHEBI:18420"/>
    </cofactor>
</comment>
<comment type="activity regulation">
    <text>Phosphorylation is necessary for activity.</text>
</comment>
<comment type="biophysicochemical properties">
    <kinetics>
        <KM evidence="9">2.5 uM for dUTP</KM>
        <text evidence="9">kM is identical for both isoform 2 and isoform 3.</text>
    </kinetics>
</comment>
<comment type="pathway">
    <text evidence="9 11">Pyrimidine metabolism; dUMP biosynthesis; dUMP from dCTP (dUTP route): step 2/2.</text>
</comment>
<comment type="subunit">
    <text evidence="4 11">Homotrimer.</text>
</comment>
<comment type="interaction">
    <interactant intactId="EBI-353224">
        <id>P33316</id>
    </interactant>
    <interactant intactId="EBI-740486">
        <id>Q6ZVK8</id>
        <label>NUDT18</label>
    </interactant>
    <organismsDiffer>false</organismsDiffer>
    <experiments>3</experiments>
</comment>
<comment type="subcellular location">
    <molecule>Isoform 2</molecule>
    <subcellularLocation>
        <location evidence="9 12">Nucleus</location>
    </subcellularLocation>
</comment>
<comment type="subcellular location">
    <molecule>Isoform 3</molecule>
    <subcellularLocation>
        <location evidence="9 12">Mitochondrion</location>
    </subcellularLocation>
</comment>
<comment type="alternative products">
    <event type="alternative splicing"/>
    <isoform>
        <id>P33316-3</id>
        <name>3</name>
        <name>DUT-M</name>
        <sequence type="displayed"/>
    </isoform>
    <isoform>
        <id>P33316-2</id>
        <name>2</name>
        <name>DUT-N</name>
        <sequence type="described" ref="VSP_001324"/>
    </isoform>
</comment>
<comment type="tissue specificity">
    <text evidence="13">Found in a variety of tissues. Isoform 3 expression is constitutive, while isoform 2 expression correlates with the onset of DNA replication (at protein level). Isoform 2 degradation coincides with the cessation of nuclear DNA replication (at protein level).</text>
</comment>
<comment type="PTM">
    <text evidence="8">Nuclear isoform 2 is phosphorylated in vivo on Ser-11, a reaction that can be catalyzed in vitro by CDC2. Phosphorylation in mature T-cells occurs in a cell cycle-dependent manner. Isoform 3 is not phosphorylated.</text>
</comment>
<comment type="disease" evidence="5 6 7">
    <disease id="DI-06507">
        <name>Bone marrow failure and diabetes mellitus syndrome</name>
        <acronym>BMFDMS</acronym>
        <description>A form of bone marrow failure syndrome, a heterogeneous group of life-threatening disorders characterized by hematopoietic defects in association with a range of variable extra-hematopoietic manifestations. BMFDMS is an autosomal recessive form characterized by various degrees of bone marrow failure, ranging from dyserythropoiesis to bone marrow aplasia, with onset in infancy or early childhood, and non-autoimmune insulin-dependent diabetes mellitus appearing in the first or second decades. Many patients show pigmentary skin abnormalities and short stature.</description>
        <dbReference type="MIM" id="620044"/>
    </disease>
    <text>The disease is caused by variants affecting the gene represented in this entry.</text>
</comment>
<comment type="miscellaneous">
    <text>Each trimer binds three substrate molecules. The ligands are bound between subunits, and for each substrate molecule, residues from adjacent subunits contribute to the binding interactions.</text>
</comment>
<comment type="miscellaneous">
    <molecule>Isoform 2</molecule>
    <text evidence="21">Major isoform.</text>
</comment>
<comment type="similarity">
    <text evidence="21">Belongs to the dUTPase family.</text>
</comment>
<comment type="sequence caution" evidence="21">
    <conflict type="frameshift">
        <sequence resource="EMBL-CDS" id="AAB71393"/>
    </conflict>
</comment>
<comment type="sequence caution" evidence="21">
    <conflict type="frameshift">
        <sequence resource="EMBL-CDS" id="AAB93866"/>
    </conflict>
</comment>
<comment type="sequence caution" evidence="21">
    <conflict type="frameshift">
        <sequence resource="EMBL-CDS" id="AAB94642"/>
    </conflict>
</comment>
<proteinExistence type="evidence at protein level"/>
<gene>
    <name type="primary">DUT</name>
</gene>
<sequence length="252" mass="26563">MTPLCPRPALCYHFLTSLLRSAMQNARGARQRAEAAVLSGPGPPLGRAAQHGIPRPLSSAGRLSQGCRGASTVGAAGWKGELPKAGGSPAPGPETPAISPSKRARPAEVGGMQLRFARLSEHATAPTRGSARAAGYDLYSAYDYTIPPMEKAVVKTDIQIALPSGCYGRVAPRSGLAAKHFIDVGAGVIDEDYRGNVGVVLFNFGKEKFEVKKGDRIAQLICERIFYPEIEEVQALDDTERGSGGFGSTGKN</sequence>
<reference key="1">
    <citation type="journal article" date="1996" name="J. Biol. Chem.">
        <title>Characterization of distinct nuclear and mitochondrial forms of human deoxyuridine triphosphate nucleotidohydrolase.</title>
        <authorList>
            <person name="Ladner R.D."/>
            <person name="McNulty D.E."/>
            <person name="Carr S.A."/>
            <person name="Roberts G.D."/>
            <person name="Caradonna S.J."/>
        </authorList>
    </citation>
    <scope>NUCLEOTIDE SEQUENCE [MRNA] (ISOFORM 2)</scope>
    <scope>PROTEIN SEQUENCE OF 70-93 (ISOFORM 3)</scope>
    <scope>PROTEIN SEQUENCE OF N-TERMINUS</scope>
    <scope>PROTEIN SEQUENCE OF 94-115; 119-128; 133-151; 156-169; 180-206 AND 217-241 (ISOFORMS 2/3)</scope>
    <scope>CLEAVAGE OF INITIATOR METHIONINE (ISOFORM 2)</scope>
    <scope>FUNCTION</scope>
    <scope>CATALYTIC ACTIVITY</scope>
    <scope>SUBCELLULAR LOCATION</scope>
    <scope>BIOPHYSICOCHEMICAL PROPERTIES</scope>
    <scope>PATHWAY</scope>
    <scope>IDENTIFICATION BY MASS SPECTROMETRY</scope>
    <source>
        <tissue>T-cell</tissue>
    </source>
</reference>
<reference key="2">
    <citation type="journal article" date="1997" name="Genomics">
        <title>Assignment of the human dUTPase gene (DUT) to chromosome 15q15-q21. 1 by fluorescence in situ hybridization.</title>
        <authorList>
            <person name="Cohen D."/>
            <person name="Heng H.H.Q."/>
            <person name="Shi X.-M."/>
            <person name="McIntosh E.M."/>
            <person name="Tsui L.-C."/>
            <person name="Pearlman R.E."/>
        </authorList>
    </citation>
    <scope>NUCLEOTIDE SEQUENCE [MRNA] (ISOFORM 2)</scope>
</reference>
<reference key="3">
    <citation type="submission" date="1997-10" db="EMBL/GenBank/DDBJ databases">
        <title>Human genomic nuclear and mitochondria dUTPase gene.</title>
        <authorList>
            <person name="Pearlman R.E."/>
        </authorList>
    </citation>
    <scope>NUCLEOTIDE SEQUENCE [GENOMIC DNA] (ISOFORMS 2 AND 3)</scope>
</reference>
<reference key="4">
    <citation type="journal article" date="1997" name="J. Biol. Chem.">
        <title>The human dUTPase gene encodes both nuclear and mitochondrial isoforms. Differential expression of the isoforms and characterization of a cDNA encoding the mitochondrial species.</title>
        <authorList>
            <person name="Ladner R.D."/>
            <person name="Caradonna S.J."/>
        </authorList>
    </citation>
    <scope>NUCLEOTIDE SEQUENCE [MRNA] (ISOFORM 3)</scope>
    <scope>NUCLEOTIDE SEQUENCE [GENOMIC DNA] OF 1-139 (ISOFORMS 2 AND 3)</scope>
    <scope>SUBCELLULAR LOCATION</scope>
    <scope>TISSUE SPECIFICITY</scope>
    <source>
        <tissue>Lung fibroblast</tissue>
    </source>
</reference>
<reference key="5">
    <citation type="submission" date="2000-09" db="EMBL/GenBank/DDBJ databases">
        <title>Unknown transcriptional variant of nuclear dUTPase in human osteosarcoma.</title>
        <authorList>
            <person name="Chano T."/>
            <person name="Okabe H."/>
            <person name="Baldini N."/>
            <person name="Lapucci C."/>
            <person name="Scotlandi K."/>
            <person name="Serra M."/>
            <person name="Saeki Y."/>
        </authorList>
    </citation>
    <scope>NUCLEOTIDE SEQUENCE [MRNA] (ISOFORM 2)</scope>
</reference>
<reference key="6">
    <citation type="journal article" date="2004" name="Nat. Genet.">
        <title>Complete sequencing and characterization of 21,243 full-length human cDNAs.</title>
        <authorList>
            <person name="Ota T."/>
            <person name="Suzuki Y."/>
            <person name="Nishikawa T."/>
            <person name="Otsuki T."/>
            <person name="Sugiyama T."/>
            <person name="Irie R."/>
            <person name="Wakamatsu A."/>
            <person name="Hayashi K."/>
            <person name="Sato H."/>
            <person name="Nagai K."/>
            <person name="Kimura K."/>
            <person name="Makita H."/>
            <person name="Sekine M."/>
            <person name="Obayashi M."/>
            <person name="Nishi T."/>
            <person name="Shibahara T."/>
            <person name="Tanaka T."/>
            <person name="Ishii S."/>
            <person name="Yamamoto J."/>
            <person name="Saito K."/>
            <person name="Kawai Y."/>
            <person name="Isono Y."/>
            <person name="Nakamura Y."/>
            <person name="Nagahari K."/>
            <person name="Murakami K."/>
            <person name="Yasuda T."/>
            <person name="Iwayanagi T."/>
            <person name="Wagatsuma M."/>
            <person name="Shiratori A."/>
            <person name="Sudo H."/>
            <person name="Hosoiri T."/>
            <person name="Kaku Y."/>
            <person name="Kodaira H."/>
            <person name="Kondo H."/>
            <person name="Sugawara M."/>
            <person name="Takahashi M."/>
            <person name="Kanda K."/>
            <person name="Yokoi T."/>
            <person name="Furuya T."/>
            <person name="Kikkawa E."/>
            <person name="Omura Y."/>
            <person name="Abe K."/>
            <person name="Kamihara K."/>
            <person name="Katsuta N."/>
            <person name="Sato K."/>
            <person name="Tanikawa M."/>
            <person name="Yamazaki M."/>
            <person name="Ninomiya K."/>
            <person name="Ishibashi T."/>
            <person name="Yamashita H."/>
            <person name="Murakawa K."/>
            <person name="Fujimori K."/>
            <person name="Tanai H."/>
            <person name="Kimata M."/>
            <person name="Watanabe M."/>
            <person name="Hiraoka S."/>
            <person name="Chiba Y."/>
            <person name="Ishida S."/>
            <person name="Ono Y."/>
            <person name="Takiguchi S."/>
            <person name="Watanabe S."/>
            <person name="Yosida M."/>
            <person name="Hotuta T."/>
            <person name="Kusano J."/>
            <person name="Kanehori K."/>
            <person name="Takahashi-Fujii A."/>
            <person name="Hara H."/>
            <person name="Tanase T.-O."/>
            <person name="Nomura Y."/>
            <person name="Togiya S."/>
            <person name="Komai F."/>
            <person name="Hara R."/>
            <person name="Takeuchi K."/>
            <person name="Arita M."/>
            <person name="Imose N."/>
            <person name="Musashino K."/>
            <person name="Yuuki H."/>
            <person name="Oshima A."/>
            <person name="Sasaki N."/>
            <person name="Aotsuka S."/>
            <person name="Yoshikawa Y."/>
            <person name="Matsunawa H."/>
            <person name="Ichihara T."/>
            <person name="Shiohata N."/>
            <person name="Sano S."/>
            <person name="Moriya S."/>
            <person name="Momiyama H."/>
            <person name="Satoh N."/>
            <person name="Takami S."/>
            <person name="Terashima Y."/>
            <person name="Suzuki O."/>
            <person name="Nakagawa S."/>
            <person name="Senoh A."/>
            <person name="Mizoguchi H."/>
            <person name="Goto Y."/>
            <person name="Shimizu F."/>
            <person name="Wakebe H."/>
            <person name="Hishigaki H."/>
            <person name="Watanabe T."/>
            <person name="Sugiyama A."/>
            <person name="Takemoto M."/>
            <person name="Kawakami B."/>
            <person name="Yamazaki M."/>
            <person name="Watanabe K."/>
            <person name="Kumagai A."/>
            <person name="Itakura S."/>
            <person name="Fukuzumi Y."/>
            <person name="Fujimori Y."/>
            <person name="Komiyama M."/>
            <person name="Tashiro H."/>
            <person name="Tanigami A."/>
            <person name="Fujiwara T."/>
            <person name="Ono T."/>
            <person name="Yamada K."/>
            <person name="Fujii Y."/>
            <person name="Ozaki K."/>
            <person name="Hirao M."/>
            <person name="Ohmori Y."/>
            <person name="Kawabata A."/>
            <person name="Hikiji T."/>
            <person name="Kobatake N."/>
            <person name="Inagaki H."/>
            <person name="Ikema Y."/>
            <person name="Okamoto S."/>
            <person name="Okitani R."/>
            <person name="Kawakami T."/>
            <person name="Noguchi S."/>
            <person name="Itoh T."/>
            <person name="Shigeta K."/>
            <person name="Senba T."/>
            <person name="Matsumura K."/>
            <person name="Nakajima Y."/>
            <person name="Mizuno T."/>
            <person name="Morinaga M."/>
            <person name="Sasaki M."/>
            <person name="Togashi T."/>
            <person name="Oyama M."/>
            <person name="Hata H."/>
            <person name="Watanabe M."/>
            <person name="Komatsu T."/>
            <person name="Mizushima-Sugano J."/>
            <person name="Satoh T."/>
            <person name="Shirai Y."/>
            <person name="Takahashi Y."/>
            <person name="Nakagawa K."/>
            <person name="Okumura K."/>
            <person name="Nagase T."/>
            <person name="Nomura N."/>
            <person name="Kikuchi H."/>
            <person name="Masuho Y."/>
            <person name="Yamashita R."/>
            <person name="Nakai K."/>
            <person name="Yada T."/>
            <person name="Nakamura Y."/>
            <person name="Ohara O."/>
            <person name="Isogai T."/>
            <person name="Sugano S."/>
        </authorList>
    </citation>
    <scope>NUCLEOTIDE SEQUENCE [LARGE SCALE MRNA] (ISOFORMS 2 AND 3)</scope>
</reference>
<reference key="7">
    <citation type="submission" date="2004-06" db="EMBL/GenBank/DDBJ databases">
        <title>Cloning of human full open reading frames in Gateway(TM) system entry vector (pDONR201).</title>
        <authorList>
            <person name="Ebert L."/>
            <person name="Schick M."/>
            <person name="Neubert P."/>
            <person name="Schatten R."/>
            <person name="Henze S."/>
            <person name="Korn B."/>
        </authorList>
    </citation>
    <scope>NUCLEOTIDE SEQUENCE [LARGE SCALE MRNA] (ISOFORM 2)</scope>
</reference>
<reference key="8">
    <citation type="submission" date="2005-02" db="EMBL/GenBank/DDBJ databases">
        <authorList>
            <consortium name="NIEHS SNPs program"/>
        </authorList>
    </citation>
    <scope>NUCLEOTIDE SEQUENCE [GENOMIC DNA]</scope>
    <scope>VARIANT SER-100</scope>
</reference>
<reference key="9">
    <citation type="submission" date="2005-07" db="EMBL/GenBank/DDBJ databases">
        <authorList>
            <person name="Mural R.J."/>
            <person name="Istrail S."/>
            <person name="Sutton G.G."/>
            <person name="Florea L."/>
            <person name="Halpern A.L."/>
            <person name="Mobarry C.M."/>
            <person name="Lippert R."/>
            <person name="Walenz B."/>
            <person name="Shatkay H."/>
            <person name="Dew I."/>
            <person name="Miller J.R."/>
            <person name="Flanigan M.J."/>
            <person name="Edwards N.J."/>
            <person name="Bolanos R."/>
            <person name="Fasulo D."/>
            <person name="Halldorsson B.V."/>
            <person name="Hannenhalli S."/>
            <person name="Turner R."/>
            <person name="Yooseph S."/>
            <person name="Lu F."/>
            <person name="Nusskern D.R."/>
            <person name="Shue B.C."/>
            <person name="Zheng X.H."/>
            <person name="Zhong F."/>
            <person name="Delcher A.L."/>
            <person name="Huson D.H."/>
            <person name="Kravitz S.A."/>
            <person name="Mouchard L."/>
            <person name="Reinert K."/>
            <person name="Remington K.A."/>
            <person name="Clark A.G."/>
            <person name="Waterman M.S."/>
            <person name="Eichler E.E."/>
            <person name="Adams M.D."/>
            <person name="Hunkapiller M.W."/>
            <person name="Myers E.W."/>
            <person name="Venter J.C."/>
        </authorList>
    </citation>
    <scope>NUCLEOTIDE SEQUENCE [LARGE SCALE GENOMIC DNA]</scope>
</reference>
<reference key="10">
    <citation type="journal article" date="2004" name="Genome Res.">
        <title>The status, quality, and expansion of the NIH full-length cDNA project: the Mammalian Gene Collection (MGC).</title>
        <authorList>
            <consortium name="The MGC Project Team"/>
        </authorList>
    </citation>
    <scope>NUCLEOTIDE SEQUENCE [LARGE SCALE MRNA] (ISOFORMS 2 AND 3)</scope>
    <source>
        <tissue>Brain</tissue>
        <tissue>Eye</tissue>
        <tissue>Urinary bladder</tissue>
    </source>
</reference>
<reference key="11">
    <citation type="journal article" date="1992" name="Proc. Natl. Acad. Sci. U.S.A.">
        <title>Human dUTP pyrophosphatase: cDNA sequence and potential biological importance of the enzyme.</title>
        <authorList>
            <person name="McIntosh E.M."/>
            <person name="Ager D.D."/>
            <person name="Gadsden M.H."/>
            <person name="Haynes R.H."/>
        </authorList>
    </citation>
    <scope>NUCLEOTIDE SEQUENCE [MRNA] OF 112-252</scope>
</reference>
<reference key="12">
    <citation type="journal article" date="1993" name="Proc. Natl. Acad. Sci. U.S.A.">
        <authorList>
            <person name="McIntosh E.M."/>
            <person name="Ager D.D."/>
            <person name="Gadsden M.H."/>
            <person name="Haynes R.H."/>
        </authorList>
    </citation>
    <scope>ERRATUM OF PUBMED:1325640</scope>
</reference>
<reference key="13">
    <citation type="journal article" date="1993" name="Proc. Natl. Acad. Sci. U.S.A.">
        <title>Maturation stage and proliferation-dependent expression of dUTPase in human T cells.</title>
        <authorList>
            <person name="Strahler J.R."/>
            <person name="Zhu X.-X."/>
            <person name="Wang Y.K."/>
            <person name="Hora N."/>
            <person name="Andrews P.C."/>
            <person name="Roseman N.A."/>
            <person name="Neel J.V."/>
            <person name="Turka L."/>
            <person name="Hanash S.M."/>
        </authorList>
    </citation>
    <scope>NUCLEOTIDE SEQUENCE [MRNA] OF 112-252</scope>
    <scope>PARTIAL PROTEIN SEQUENCE</scope>
    <scope>PHOSPHORYLATION</scope>
    <source>
        <tissue>Lymphocyte</tissue>
    </source>
</reference>
<reference key="14">
    <citation type="journal article" date="1996" name="J. Biol. Chem.">
        <title>Identification of a consensus cyclin-dependent kinase phosphorylation site unique to the nuclear form of human deoxyuridine triphosphate nucleotidohydrolase.</title>
        <authorList>
            <person name="Ladner R.D."/>
            <person name="Carr S.A."/>
            <person name="Huddleston M.J."/>
            <person name="McNulty D.E."/>
            <person name="Caradonna S.J."/>
        </authorList>
    </citation>
    <scope>PROTEIN SEQUENCE OF N-TERMINUS</scope>
    <scope>PHOSPHORYLATION AT SER-11 (ISOFORM 2)</scope>
    <scope>MUTAGENESIS OF SER-99</scope>
    <scope>IDENTIFICATION BY MASS SPECTROMETRY</scope>
</reference>
<reference key="15">
    <citation type="journal article" date="2006" name="Cell">
        <title>Global, in vivo, and site-specific phosphorylation dynamics in signaling networks.</title>
        <authorList>
            <person name="Olsen J.V."/>
            <person name="Blagoev B."/>
            <person name="Gnad F."/>
            <person name="Macek B."/>
            <person name="Kumar C."/>
            <person name="Mortensen P."/>
            <person name="Mann M."/>
        </authorList>
    </citation>
    <scope>IDENTIFICATION BY MASS SPECTROMETRY [LARGE SCALE ANALYSIS]</scope>
    <source>
        <tissue>Cervix carcinoma</tissue>
    </source>
</reference>
<reference key="16">
    <citation type="journal article" date="2006" name="Nat. Biotechnol.">
        <title>A probability-based approach for high-throughput protein phosphorylation analysis and site localization.</title>
        <authorList>
            <person name="Beausoleil S.A."/>
            <person name="Villen J."/>
            <person name="Gerber S.A."/>
            <person name="Rush J."/>
            <person name="Gygi S.P."/>
        </authorList>
    </citation>
    <scope>IDENTIFICATION BY MASS SPECTROMETRY [LARGE SCALE ANALYSIS]</scope>
    <source>
        <tissue>Cervix carcinoma</tissue>
    </source>
</reference>
<reference key="17">
    <citation type="journal article" date="2008" name="Proc. Natl. Acad. Sci. U.S.A.">
        <title>A quantitative atlas of mitotic phosphorylation.</title>
        <authorList>
            <person name="Dephoure N."/>
            <person name="Zhou C."/>
            <person name="Villen J."/>
            <person name="Beausoleil S.A."/>
            <person name="Bakalarski C.E."/>
            <person name="Elledge S.J."/>
            <person name="Gygi S.P."/>
        </authorList>
    </citation>
    <scope>IDENTIFICATION BY MASS SPECTROMETRY [LARGE SCALE ANALYSIS]</scope>
    <source>
        <tissue>Cervix carcinoma</tissue>
    </source>
</reference>
<reference key="18">
    <citation type="journal article" date="2010" name="Sci. Signal.">
        <title>Quantitative phosphoproteomics reveals widespread full phosphorylation site occupancy during mitosis.</title>
        <authorList>
            <person name="Olsen J.V."/>
            <person name="Vermeulen M."/>
            <person name="Santamaria A."/>
            <person name="Kumar C."/>
            <person name="Miller M.L."/>
            <person name="Jensen L.J."/>
            <person name="Gnad F."/>
            <person name="Cox J."/>
            <person name="Jensen T.S."/>
            <person name="Nigg E.A."/>
            <person name="Brunak S."/>
            <person name="Mann M."/>
        </authorList>
    </citation>
    <scope>PHOSPHORYLATION [LARGE SCALE ANALYSIS] AT SER-88</scope>
    <scope>PHOSPHORYLATION [LARGE SCALE ANALYSIS] AT SER-11 (ISOFORM 2)</scope>
    <scope>IDENTIFICATION BY MASS SPECTROMETRY [LARGE SCALE ANALYSIS]</scope>
    <source>
        <tissue>Cervix carcinoma</tissue>
    </source>
</reference>
<reference key="19">
    <citation type="journal article" date="2011" name="BMC Syst. Biol.">
        <title>Initial characterization of the human central proteome.</title>
        <authorList>
            <person name="Burkard T.R."/>
            <person name="Planyavsky M."/>
            <person name="Kaupe I."/>
            <person name="Breitwieser F.P."/>
            <person name="Buerckstuemmer T."/>
            <person name="Bennett K.L."/>
            <person name="Superti-Furga G."/>
            <person name="Colinge J."/>
        </authorList>
    </citation>
    <scope>IDENTIFICATION BY MASS SPECTROMETRY [LARGE SCALE ANALYSIS]</scope>
</reference>
<reference key="20">
    <citation type="journal article" date="2011" name="Sci. Signal.">
        <title>System-wide temporal characterization of the proteome and phosphoproteome of human embryonic stem cell differentiation.</title>
        <authorList>
            <person name="Rigbolt K.T."/>
            <person name="Prokhorova T.A."/>
            <person name="Akimov V."/>
            <person name="Henningsen J."/>
            <person name="Johansen P.T."/>
            <person name="Kratchmarova I."/>
            <person name="Kassem M."/>
            <person name="Mann M."/>
            <person name="Olsen J.V."/>
            <person name="Blagoev B."/>
        </authorList>
    </citation>
    <scope>PHOSPHORYLATION [LARGE SCALE ANALYSIS] AT SER-11 (ISOFORM 2)</scope>
    <scope>IDENTIFICATION BY MASS SPECTROMETRY [LARGE SCALE ANALYSIS]</scope>
</reference>
<reference key="21">
    <citation type="journal article" date="2013" name="J. Proteome Res.">
        <title>Toward a comprehensive characterization of a human cancer cell phosphoproteome.</title>
        <authorList>
            <person name="Zhou H."/>
            <person name="Di Palma S."/>
            <person name="Preisinger C."/>
            <person name="Peng M."/>
            <person name="Polat A.N."/>
            <person name="Heck A.J."/>
            <person name="Mohammed S."/>
        </authorList>
    </citation>
    <scope>PHOSPHORYLATION [LARGE SCALE ANALYSIS] AT SER-88 AND SER-99</scope>
    <scope>IDENTIFICATION BY MASS SPECTROMETRY [LARGE SCALE ANALYSIS]</scope>
    <source>
        <tissue>Cervix carcinoma</tissue>
        <tissue>Erythroleukemia</tissue>
    </source>
</reference>
<reference key="22">
    <citation type="journal article" date="2014" name="J. Proteomics">
        <title>An enzyme assisted RP-RPLC approach for in-depth analysis of human liver phosphoproteome.</title>
        <authorList>
            <person name="Bian Y."/>
            <person name="Song C."/>
            <person name="Cheng K."/>
            <person name="Dong M."/>
            <person name="Wang F."/>
            <person name="Huang J."/>
            <person name="Sun D."/>
            <person name="Wang L."/>
            <person name="Ye M."/>
            <person name="Zou H."/>
        </authorList>
    </citation>
    <scope>PHOSPHORYLATION [LARGE SCALE ANALYSIS] AT SER-88</scope>
    <scope>IDENTIFICATION BY MASS SPECTROMETRY [LARGE SCALE ANALYSIS]</scope>
    <source>
        <tissue>Liver</tissue>
    </source>
</reference>
<reference key="23">
    <citation type="journal article" date="2015" name="Proteomics">
        <title>N-terminome analysis of the human mitochondrial proteome.</title>
        <authorList>
            <person name="Vaca Jacome A.S."/>
            <person name="Rabilloud T."/>
            <person name="Schaeffer-Reiss C."/>
            <person name="Rompais M."/>
            <person name="Ayoub D."/>
            <person name="Lane L."/>
            <person name="Bairoch A."/>
            <person name="Van Dorsselaer A."/>
            <person name="Carapito C."/>
        </authorList>
    </citation>
    <scope>CLEAVAGE OF TRANSIT PEPTIDE [LARGE SCALE ANALYSIS] AFTER GLY-69</scope>
    <scope>IDENTIFICATION BY MASS SPECTROMETRY [LARGE SCALE ANALYSIS]</scope>
</reference>
<reference key="24">
    <citation type="journal article" date="1996" name="Structure">
        <title>Human dUTP pyrophosphatase: uracil recognition by a beta hairpin and active sites formed by three separate subunits.</title>
        <authorList>
            <person name="Mol C.D."/>
            <person name="Harris J.M."/>
            <person name="McIntosh E.M."/>
            <person name="Tainer J.A."/>
        </authorList>
    </citation>
    <scope>X-RAY CRYSTALLOGRAPHY (2.0 ANGSTROMS) OF 112-252 IN COMPLEX WITH SUBSTRATE AND MAGNESIUM IONS</scope>
    <scope>FUNCTION</scope>
    <scope>CATALYTIC ACTIVITY</scope>
    <scope>COFACTOR</scope>
    <scope>PATHWAY</scope>
    <scope>SUBUNIT</scope>
</reference>
<reference key="25">
    <citation type="journal article" date="2007" name="FEBS Lett.">
        <title>Active site closure facilitates juxtaposition of reactant atoms for initiation of catalysis by human dUTPase.</title>
        <authorList>
            <person name="Varga B."/>
            <person name="Barabas O."/>
            <person name="Kovari J."/>
            <person name="Toth J."/>
            <person name="Hunyadi-Gulyas E."/>
            <person name="Klement E."/>
            <person name="Medzihradszky K.F."/>
            <person name="Toelgyesi F."/>
            <person name="Fidy J."/>
            <person name="Vertessy B.G."/>
        </authorList>
    </citation>
    <scope>X-RAY CRYSTALLOGRAPHY (1.8 ANGSTROMS) OF 89-252 (ISOFORM 2) IN COMPLEX WITH SUBSTRATE ANALOG AND MAGNESIUM IONS</scope>
    <scope>FUNCTION</scope>
    <scope>CATALYTIC ACTIVITY</scope>
    <scope>IDENTIFICATION BY MASS SPECTROMETRY</scope>
    <scope>SUBUNIT</scope>
</reference>
<reference key="26">
    <citation type="journal article" date="2017" name="Diabetes">
        <title>dUTPase (DUT) Is Mutated in a Novel Monogenic Syndrome With Diabetes and Bone Marrow Failure.</title>
        <authorList>
            <person name="Dos Santos R.S."/>
            <person name="Daures M."/>
            <person name="Philippi A."/>
            <person name="Romero S."/>
            <person name="Marselli L."/>
            <person name="Marchetti P."/>
            <person name="Senee V."/>
            <person name="Bacq D."/>
            <person name="Besse C."/>
            <person name="Baz B."/>
            <person name="Marroqui L."/>
            <person name="Ivanoff S."/>
            <person name="Masliah-Planchon J."/>
            <person name="Nicolino M."/>
            <person name="Soulier J."/>
            <person name="Socie G."/>
            <person name="Eizirik D.L."/>
            <person name="Gautier J.F."/>
            <person name="Julier C."/>
        </authorList>
    </citation>
    <scope>VARIANT BMFDMS CYS-142</scope>
    <scope>INVOLVEMENT IN BMFDMS</scope>
</reference>
<reference key="27">
    <citation type="journal article" date="2022" name="Am. J. Hum. Genet.">
        <title>Germline thymidylate synthase deficiency impacts nucleotide metabolism and causes dyskeratosis congenita.</title>
        <authorList>
            <person name="Tummala H."/>
            <person name="Walne A."/>
            <person name="Buccafusca R."/>
            <person name="Alnajar J."/>
            <person name="Szabo A."/>
            <person name="Robinson P."/>
            <person name="McConkie-Rosell A."/>
            <person name="Wilson M."/>
            <person name="Crowley S."/>
            <person name="Kinsler V."/>
            <person name="Ewins A.M."/>
            <person name="Madapura P.M."/>
            <person name="Patel M."/>
            <person name="Pontikos N."/>
            <person name="Codd V."/>
            <person name="Vulliamy T."/>
            <person name="Dokal I."/>
        </authorList>
    </citation>
    <scope>VARIANTS BMFDMS CYS-142; TRP-173 AND CYS-227</scope>
</reference>
<reference key="28">
    <citation type="journal article" date="2022" name="Am. J. Med. Genet. A">
        <title>Further evidence supporting the role of DUT gene in diabetes with bone marrow failure syndrome.</title>
        <authorList>
            <person name="Ghawil M."/>
            <person name="Abdulrahman F."/>
            <person name="Hadeed I."/>
            <person name="Doggah M."/>
            <person name="Zarroug S."/>
            <person name="Habeb A."/>
        </authorList>
    </citation>
    <scope>VARIANT BMFDMS CYS-142</scope>
</reference>
<name>DUT_HUMAN</name>
<accession>P33316</accession>
<accession>A8K650</accession>
<accession>B4DPR5</accession>
<accession>O14785</accession>
<accession>Q16708</accession>
<accession>Q16860</accession>
<accession>Q6FHN1</accession>
<accession>Q6NSA3</accession>
<accession>Q96Q81</accession>
<protein>
    <recommendedName>
        <fullName evidence="17">Deoxyuridine 5'-triphosphate nucleotidohydrolase, mitochondrial</fullName>
        <shortName evidence="17">dUTPase</shortName>
        <ecNumber evidence="4 9 11">3.6.1.23</ecNumber>
    </recommendedName>
    <alternativeName>
        <fullName>dUTP pyrophosphatase</fullName>
    </alternativeName>
</protein>
<keyword id="KW-0002">3D-structure</keyword>
<keyword id="KW-0025">Alternative splicing</keyword>
<keyword id="KW-0219">Diabetes mellitus</keyword>
<keyword id="KW-0903">Direct protein sequencing</keyword>
<keyword id="KW-0225">Disease variant</keyword>
<keyword id="KW-0378">Hydrolase</keyword>
<keyword id="KW-0460">Magnesium</keyword>
<keyword id="KW-0496">Mitochondrion</keyword>
<keyword id="KW-0546">Nucleotide metabolism</keyword>
<keyword id="KW-0539">Nucleus</keyword>
<keyword id="KW-0597">Phosphoprotein</keyword>
<keyword id="KW-1267">Proteomics identification</keyword>
<keyword id="KW-1185">Reference proteome</keyword>
<keyword id="KW-0809">Transit peptide</keyword>